<comment type="function">
    <text>Involved in oxygen transport from the lung to the various peripheral tissues.</text>
</comment>
<comment type="subunit">
    <text>Heterotetramer of two alpha chains and two beta chains.</text>
</comment>
<comment type="tissue specificity">
    <text>Red blood cells.</text>
</comment>
<comment type="similarity">
    <text evidence="3">Belongs to the globin family.</text>
</comment>
<accession>P02040</accession>
<reference key="1">
    <citation type="journal article" date="1971" name="Comp. Biochem. Physiol.">
        <title>Primate hemoglobins: their structure, function and evolution. I. Amino acid compositions of the tryptic peptides from the beta chain of Cebus albifrons.</title>
        <authorList>
            <person name="Nute P.E."/>
            <person name="Sullivan B."/>
        </authorList>
    </citation>
    <scope>PROTEIN SEQUENCE</scope>
</reference>
<gene>
    <name type="primary">HBB</name>
</gene>
<sequence>VHLTAEEKSAVTALWGKVNVDEVGGEALGRLLVVYPWTQRFFDSFGDLSTPDAVMNNPKVKAHGKKVLGAFSDGLTHLDNLKGTFAQLSELHCDKLHVDPENFRLLGNVLVCVLAHHFGKEFTPQVQAAYQKVVAGVATALAHKYH</sequence>
<name>HBB_CEBAL</name>
<keyword id="KW-0007">Acetylation</keyword>
<keyword id="KW-0903">Direct protein sequencing</keyword>
<keyword id="KW-0349">Heme</keyword>
<keyword id="KW-0408">Iron</keyword>
<keyword id="KW-0479">Metal-binding</keyword>
<keyword id="KW-0561">Oxygen transport</keyword>
<keyword id="KW-0597">Phosphoprotein</keyword>
<keyword id="KW-0702">S-nitrosylation</keyword>
<keyword id="KW-0813">Transport</keyword>
<proteinExistence type="evidence at protein level"/>
<evidence type="ECO:0000250" key="1">
    <source>
        <dbReference type="UniProtKB" id="P02086"/>
    </source>
</evidence>
<evidence type="ECO:0000250" key="2">
    <source>
        <dbReference type="UniProtKB" id="P68871"/>
    </source>
</evidence>
<evidence type="ECO:0000255" key="3">
    <source>
        <dbReference type="PROSITE-ProRule" id="PRU00238"/>
    </source>
</evidence>
<protein>
    <recommendedName>
        <fullName>Hemoglobin subunit beta</fullName>
    </recommendedName>
    <alternativeName>
        <fullName>Beta-globin</fullName>
    </alternativeName>
    <alternativeName>
        <fullName>Hemoglobin beta chain</fullName>
    </alternativeName>
</protein>
<organism>
    <name type="scientific">Cebus albifrons</name>
    <name type="common">White-fronted capuchin</name>
    <dbReference type="NCBI Taxonomy" id="9514"/>
    <lineage>
        <taxon>Eukaryota</taxon>
        <taxon>Metazoa</taxon>
        <taxon>Chordata</taxon>
        <taxon>Craniata</taxon>
        <taxon>Vertebrata</taxon>
        <taxon>Euteleostomi</taxon>
        <taxon>Mammalia</taxon>
        <taxon>Eutheria</taxon>
        <taxon>Euarchontoglires</taxon>
        <taxon>Primates</taxon>
        <taxon>Haplorrhini</taxon>
        <taxon>Platyrrhini</taxon>
        <taxon>Cebidae</taxon>
        <taxon>Cebinae</taxon>
        <taxon>Cebus</taxon>
    </lineage>
</organism>
<dbReference type="PIR" id="A02361">
    <property type="entry name" value="HBMQAA"/>
</dbReference>
<dbReference type="SMR" id="P02040"/>
<dbReference type="GO" id="GO:0072562">
    <property type="term" value="C:blood microparticle"/>
    <property type="evidence" value="ECO:0007669"/>
    <property type="project" value="TreeGrafter"/>
</dbReference>
<dbReference type="GO" id="GO:0031838">
    <property type="term" value="C:haptoglobin-hemoglobin complex"/>
    <property type="evidence" value="ECO:0007669"/>
    <property type="project" value="TreeGrafter"/>
</dbReference>
<dbReference type="GO" id="GO:0005833">
    <property type="term" value="C:hemoglobin complex"/>
    <property type="evidence" value="ECO:0007669"/>
    <property type="project" value="InterPro"/>
</dbReference>
<dbReference type="GO" id="GO:0031720">
    <property type="term" value="F:haptoglobin binding"/>
    <property type="evidence" value="ECO:0007669"/>
    <property type="project" value="TreeGrafter"/>
</dbReference>
<dbReference type="GO" id="GO:0020037">
    <property type="term" value="F:heme binding"/>
    <property type="evidence" value="ECO:0007669"/>
    <property type="project" value="InterPro"/>
</dbReference>
<dbReference type="GO" id="GO:0031721">
    <property type="term" value="F:hemoglobin alpha binding"/>
    <property type="evidence" value="ECO:0007669"/>
    <property type="project" value="TreeGrafter"/>
</dbReference>
<dbReference type="GO" id="GO:0046872">
    <property type="term" value="F:metal ion binding"/>
    <property type="evidence" value="ECO:0007669"/>
    <property type="project" value="UniProtKB-KW"/>
</dbReference>
<dbReference type="GO" id="GO:0043177">
    <property type="term" value="F:organic acid binding"/>
    <property type="evidence" value="ECO:0007669"/>
    <property type="project" value="TreeGrafter"/>
</dbReference>
<dbReference type="GO" id="GO:0019825">
    <property type="term" value="F:oxygen binding"/>
    <property type="evidence" value="ECO:0007669"/>
    <property type="project" value="InterPro"/>
</dbReference>
<dbReference type="GO" id="GO:0005344">
    <property type="term" value="F:oxygen carrier activity"/>
    <property type="evidence" value="ECO:0007669"/>
    <property type="project" value="UniProtKB-KW"/>
</dbReference>
<dbReference type="GO" id="GO:0004601">
    <property type="term" value="F:peroxidase activity"/>
    <property type="evidence" value="ECO:0007669"/>
    <property type="project" value="TreeGrafter"/>
</dbReference>
<dbReference type="GO" id="GO:0042744">
    <property type="term" value="P:hydrogen peroxide catabolic process"/>
    <property type="evidence" value="ECO:0007669"/>
    <property type="project" value="TreeGrafter"/>
</dbReference>
<dbReference type="CDD" id="cd08925">
    <property type="entry name" value="Hb-beta-like"/>
    <property type="match status" value="1"/>
</dbReference>
<dbReference type="FunFam" id="1.10.490.10:FF:000001">
    <property type="entry name" value="Hemoglobin subunit beta"/>
    <property type="match status" value="1"/>
</dbReference>
<dbReference type="Gene3D" id="1.10.490.10">
    <property type="entry name" value="Globins"/>
    <property type="match status" value="1"/>
</dbReference>
<dbReference type="InterPro" id="IPR000971">
    <property type="entry name" value="Globin"/>
</dbReference>
<dbReference type="InterPro" id="IPR009050">
    <property type="entry name" value="Globin-like_sf"/>
</dbReference>
<dbReference type="InterPro" id="IPR012292">
    <property type="entry name" value="Globin/Proto"/>
</dbReference>
<dbReference type="InterPro" id="IPR002337">
    <property type="entry name" value="Hemoglobin_b"/>
</dbReference>
<dbReference type="InterPro" id="IPR050056">
    <property type="entry name" value="Hemoglobin_oxygen_transport"/>
</dbReference>
<dbReference type="PANTHER" id="PTHR11442">
    <property type="entry name" value="HEMOGLOBIN FAMILY MEMBER"/>
    <property type="match status" value="1"/>
</dbReference>
<dbReference type="PANTHER" id="PTHR11442:SF42">
    <property type="entry name" value="HEMOGLOBIN SUBUNIT BETA"/>
    <property type="match status" value="1"/>
</dbReference>
<dbReference type="Pfam" id="PF00042">
    <property type="entry name" value="Globin"/>
    <property type="match status" value="1"/>
</dbReference>
<dbReference type="PRINTS" id="PR00814">
    <property type="entry name" value="BETAHAEM"/>
</dbReference>
<dbReference type="SUPFAM" id="SSF46458">
    <property type="entry name" value="Globin-like"/>
    <property type="match status" value="1"/>
</dbReference>
<dbReference type="PROSITE" id="PS01033">
    <property type="entry name" value="GLOBIN"/>
    <property type="match status" value="1"/>
</dbReference>
<feature type="chain" id="PRO_0000052916" description="Hemoglobin subunit beta">
    <location>
        <begin position="1"/>
        <end position="146"/>
    </location>
</feature>
<feature type="domain" description="Globin" evidence="3">
    <location>
        <begin position="2"/>
        <end position="146"/>
    </location>
</feature>
<feature type="binding site" description="distal binding residue">
    <location>
        <position position="63"/>
    </location>
    <ligand>
        <name>heme b</name>
        <dbReference type="ChEBI" id="CHEBI:60344"/>
    </ligand>
    <ligandPart>
        <name>Fe</name>
        <dbReference type="ChEBI" id="CHEBI:18248"/>
    </ligandPart>
</feature>
<feature type="binding site" description="proximal binding residue">
    <location>
        <position position="92"/>
    </location>
    <ligand>
        <name>heme b</name>
        <dbReference type="ChEBI" id="CHEBI:60344"/>
    </ligand>
    <ligandPart>
        <name>Fe</name>
        <dbReference type="ChEBI" id="CHEBI:18248"/>
    </ligandPart>
</feature>
<feature type="modified residue" description="N-acetylvaline" evidence="1">
    <location>
        <position position="1"/>
    </location>
</feature>
<feature type="modified residue" description="Phosphothreonine" evidence="2">
    <location>
        <position position="12"/>
    </location>
</feature>
<feature type="modified residue" description="Phosphoserine" evidence="2">
    <location>
        <position position="44"/>
    </location>
</feature>
<feature type="modified residue" description="N6-acetyllysine" evidence="2">
    <location>
        <position position="59"/>
    </location>
</feature>
<feature type="modified residue" description="N6-acetyllysine" evidence="2">
    <location>
        <position position="82"/>
    </location>
</feature>
<feature type="modified residue" description="S-nitrosocysteine" evidence="2">
    <location>
        <position position="93"/>
    </location>
</feature>
<feature type="modified residue" description="N6-acetyllysine" evidence="2">
    <location>
        <position position="144"/>
    </location>
</feature>
<feature type="sequence variant" description="In 50% of the molecules.">
    <original>A</original>
    <variation>T</variation>
    <location>
        <position position="13"/>
    </location>
</feature>